<reference key="1">
    <citation type="journal article" date="1996" name="Nucleic Acids Res.">
        <title>Complete sequence analysis of the genome of the bacterium Mycoplasma pneumoniae.</title>
        <authorList>
            <person name="Himmelreich R."/>
            <person name="Hilbert H."/>
            <person name="Plagens H."/>
            <person name="Pirkl E."/>
            <person name="Li B.-C."/>
            <person name="Herrmann R."/>
        </authorList>
    </citation>
    <scope>NUCLEOTIDE SEQUENCE [LARGE SCALE GENOMIC DNA]</scope>
    <source>
        <strain>ATCC 29342 / M129 / Subtype 1</strain>
    </source>
</reference>
<accession>P78011</accession>
<name>GLYA_MYCPN</name>
<keyword id="KW-0028">Amino-acid biosynthesis</keyword>
<keyword id="KW-0963">Cytoplasm</keyword>
<keyword id="KW-0554">One-carbon metabolism</keyword>
<keyword id="KW-0663">Pyridoxal phosphate</keyword>
<keyword id="KW-1185">Reference proteome</keyword>
<keyword id="KW-0808">Transferase</keyword>
<feature type="chain" id="PRO_0000113616" description="Serine hydroxymethyltransferase">
    <location>
        <begin position="1"/>
        <end position="406"/>
    </location>
</feature>
<feature type="binding site" evidence="1">
    <location>
        <position position="111"/>
    </location>
    <ligand>
        <name>(6S)-5,6,7,8-tetrahydrofolate</name>
        <dbReference type="ChEBI" id="CHEBI:57453"/>
    </ligand>
</feature>
<feature type="binding site" evidence="1">
    <location>
        <begin position="115"/>
        <end position="117"/>
    </location>
    <ligand>
        <name>(6S)-5,6,7,8-tetrahydrofolate</name>
        <dbReference type="ChEBI" id="CHEBI:57453"/>
    </ligand>
</feature>
<feature type="site" description="Plays an important role in substrate specificity" evidence="1">
    <location>
        <position position="219"/>
    </location>
</feature>
<feature type="modified residue" description="N6-(pyridoxal phosphate)lysine" evidence="1">
    <location>
        <position position="220"/>
    </location>
</feature>
<organism>
    <name type="scientific">Mycoplasma pneumoniae (strain ATCC 29342 / M129 / Subtype 1)</name>
    <name type="common">Mycoplasmoides pneumoniae</name>
    <dbReference type="NCBI Taxonomy" id="272634"/>
    <lineage>
        <taxon>Bacteria</taxon>
        <taxon>Bacillati</taxon>
        <taxon>Mycoplasmatota</taxon>
        <taxon>Mycoplasmoidales</taxon>
        <taxon>Mycoplasmoidaceae</taxon>
        <taxon>Mycoplasmoides</taxon>
    </lineage>
</organism>
<protein>
    <recommendedName>
        <fullName evidence="1">Serine hydroxymethyltransferase</fullName>
        <shortName evidence="1">SHMT</shortName>
        <shortName evidence="1">Serine methylase</shortName>
        <ecNumber evidence="1">2.1.2.1</ecNumber>
    </recommendedName>
</protein>
<sequence length="406" mass="45266">MEPKIRRILNKELQRQRDCICLIASENYVSRDILEVTGSILTNKYAEGYPTRRFYEGCEVVDESESLAINTCKELFGAKWANVQPHSGSSANYAVYLALLKPGDAILGLDLNCGGHLTHGNKFNFSGKQYQPYSYTINPETEMLDYDEVLRVAREVKPKLIICGFSNYSRTVDFERFSAIAKEVGAYLLADIAHIAGLVAAGLHPNPLPYTDVVTSTTHKTLRGPRGGLIMSNNEAIIRKLDSGVFPGCQGGPLQHVIAAKYVCFKEALQPKYKQYIQNVKTNAASMASWFKQQGYRVISNGTDTHLFSLDVGKGKDVSQWLQQANIVLNMNTVPFDKNPAINPSGIRIGTPAMTTRGFKEKHFLYVAALIDKIIKSDGNKKVIKEVKKAVLKLLERFPLYKGLEY</sequence>
<gene>
    <name evidence="1" type="primary">glyA</name>
    <name type="ordered locus">MPN_576</name>
    <name type="ORF">MP266</name>
</gene>
<proteinExistence type="inferred from homology"/>
<dbReference type="EC" id="2.1.2.1" evidence="1"/>
<dbReference type="EMBL" id="U00089">
    <property type="protein sequence ID" value="AAB95914.1"/>
    <property type="molecule type" value="Genomic_DNA"/>
</dbReference>
<dbReference type="PIR" id="S73592">
    <property type="entry name" value="S73592"/>
</dbReference>
<dbReference type="RefSeq" id="NP_110265.1">
    <property type="nucleotide sequence ID" value="NC_000912.1"/>
</dbReference>
<dbReference type="RefSeq" id="WP_010874933.1">
    <property type="nucleotide sequence ID" value="NZ_OU342337.1"/>
</dbReference>
<dbReference type="SMR" id="P78011"/>
<dbReference type="STRING" id="272634.MPN_576"/>
<dbReference type="EnsemblBacteria" id="AAB95914">
    <property type="protein sequence ID" value="AAB95914"/>
    <property type="gene ID" value="MPN_576"/>
</dbReference>
<dbReference type="KEGG" id="mpn:MPN_576"/>
<dbReference type="PATRIC" id="fig|272634.6.peg.638"/>
<dbReference type="HOGENOM" id="CLU_022477_2_1_14"/>
<dbReference type="OrthoDB" id="9803846at2"/>
<dbReference type="BioCyc" id="MetaCyc:MONOMER-581"/>
<dbReference type="BioCyc" id="MPNE272634:G1GJ3-941-MONOMER"/>
<dbReference type="UniPathway" id="UPA00193"/>
<dbReference type="UniPathway" id="UPA00288">
    <property type="reaction ID" value="UER01023"/>
</dbReference>
<dbReference type="Proteomes" id="UP000000808">
    <property type="component" value="Chromosome"/>
</dbReference>
<dbReference type="GO" id="GO:0005829">
    <property type="term" value="C:cytosol"/>
    <property type="evidence" value="ECO:0007669"/>
    <property type="project" value="TreeGrafter"/>
</dbReference>
<dbReference type="GO" id="GO:0004372">
    <property type="term" value="F:glycine hydroxymethyltransferase activity"/>
    <property type="evidence" value="ECO:0007669"/>
    <property type="project" value="UniProtKB-UniRule"/>
</dbReference>
<dbReference type="GO" id="GO:0030170">
    <property type="term" value="F:pyridoxal phosphate binding"/>
    <property type="evidence" value="ECO:0007669"/>
    <property type="project" value="UniProtKB-UniRule"/>
</dbReference>
<dbReference type="GO" id="GO:0019264">
    <property type="term" value="P:glycine biosynthetic process from serine"/>
    <property type="evidence" value="ECO:0007669"/>
    <property type="project" value="UniProtKB-UniRule"/>
</dbReference>
<dbReference type="GO" id="GO:0035999">
    <property type="term" value="P:tetrahydrofolate interconversion"/>
    <property type="evidence" value="ECO:0007669"/>
    <property type="project" value="UniProtKB-UniRule"/>
</dbReference>
<dbReference type="CDD" id="cd00378">
    <property type="entry name" value="SHMT"/>
    <property type="match status" value="1"/>
</dbReference>
<dbReference type="FunFam" id="3.40.640.10:FF:000001">
    <property type="entry name" value="Serine hydroxymethyltransferase"/>
    <property type="match status" value="1"/>
</dbReference>
<dbReference type="Gene3D" id="3.90.1150.10">
    <property type="entry name" value="Aspartate Aminotransferase, domain 1"/>
    <property type="match status" value="1"/>
</dbReference>
<dbReference type="Gene3D" id="3.40.640.10">
    <property type="entry name" value="Type I PLP-dependent aspartate aminotransferase-like (Major domain)"/>
    <property type="match status" value="1"/>
</dbReference>
<dbReference type="HAMAP" id="MF_00051">
    <property type="entry name" value="SHMT"/>
    <property type="match status" value="1"/>
</dbReference>
<dbReference type="InterPro" id="IPR015424">
    <property type="entry name" value="PyrdxlP-dep_Trfase"/>
</dbReference>
<dbReference type="InterPro" id="IPR015421">
    <property type="entry name" value="PyrdxlP-dep_Trfase_major"/>
</dbReference>
<dbReference type="InterPro" id="IPR015422">
    <property type="entry name" value="PyrdxlP-dep_Trfase_small"/>
</dbReference>
<dbReference type="InterPro" id="IPR001085">
    <property type="entry name" value="Ser_HO-MeTrfase"/>
</dbReference>
<dbReference type="InterPro" id="IPR049943">
    <property type="entry name" value="Ser_HO-MeTrfase-like"/>
</dbReference>
<dbReference type="InterPro" id="IPR019798">
    <property type="entry name" value="Ser_HO-MeTrfase_PLP_BS"/>
</dbReference>
<dbReference type="InterPro" id="IPR039429">
    <property type="entry name" value="SHMT-like_dom"/>
</dbReference>
<dbReference type="NCBIfam" id="NF000586">
    <property type="entry name" value="PRK00011.1"/>
    <property type="match status" value="1"/>
</dbReference>
<dbReference type="PANTHER" id="PTHR11680">
    <property type="entry name" value="SERINE HYDROXYMETHYLTRANSFERASE"/>
    <property type="match status" value="1"/>
</dbReference>
<dbReference type="PANTHER" id="PTHR11680:SF35">
    <property type="entry name" value="SERINE HYDROXYMETHYLTRANSFERASE 1"/>
    <property type="match status" value="1"/>
</dbReference>
<dbReference type="Pfam" id="PF00464">
    <property type="entry name" value="SHMT"/>
    <property type="match status" value="1"/>
</dbReference>
<dbReference type="PIRSF" id="PIRSF000412">
    <property type="entry name" value="SHMT"/>
    <property type="match status" value="1"/>
</dbReference>
<dbReference type="SUPFAM" id="SSF53383">
    <property type="entry name" value="PLP-dependent transferases"/>
    <property type="match status" value="1"/>
</dbReference>
<dbReference type="PROSITE" id="PS00096">
    <property type="entry name" value="SHMT"/>
    <property type="match status" value="1"/>
</dbReference>
<comment type="function">
    <text evidence="1">Catalyzes the reversible interconversion of serine and glycine with tetrahydrofolate (THF) serving as the one-carbon carrier. This reaction serves as the major source of one-carbon groups required for the biosynthesis of purines, thymidylate, methionine, and other important biomolecules. Also exhibits THF-independent aldolase activity toward beta-hydroxyamino acids, producing glycine and aldehydes, via a retro-aldol mechanism.</text>
</comment>
<comment type="catalytic activity">
    <reaction evidence="1">
        <text>(6R)-5,10-methylene-5,6,7,8-tetrahydrofolate + glycine + H2O = (6S)-5,6,7,8-tetrahydrofolate + L-serine</text>
        <dbReference type="Rhea" id="RHEA:15481"/>
        <dbReference type="ChEBI" id="CHEBI:15377"/>
        <dbReference type="ChEBI" id="CHEBI:15636"/>
        <dbReference type="ChEBI" id="CHEBI:33384"/>
        <dbReference type="ChEBI" id="CHEBI:57305"/>
        <dbReference type="ChEBI" id="CHEBI:57453"/>
        <dbReference type="EC" id="2.1.2.1"/>
    </reaction>
</comment>
<comment type="cofactor">
    <cofactor evidence="1">
        <name>pyridoxal 5'-phosphate</name>
        <dbReference type="ChEBI" id="CHEBI:597326"/>
    </cofactor>
</comment>
<comment type="pathway">
    <text evidence="1">One-carbon metabolism; tetrahydrofolate interconversion.</text>
</comment>
<comment type="pathway">
    <text evidence="1">Amino-acid biosynthesis; glycine biosynthesis; glycine from L-serine: step 1/1.</text>
</comment>
<comment type="subunit">
    <text evidence="1">Homodimer.</text>
</comment>
<comment type="subcellular location">
    <subcellularLocation>
        <location evidence="1">Cytoplasm</location>
    </subcellularLocation>
</comment>
<comment type="similarity">
    <text evidence="1">Belongs to the SHMT family.</text>
</comment>
<evidence type="ECO:0000255" key="1">
    <source>
        <dbReference type="HAMAP-Rule" id="MF_00051"/>
    </source>
</evidence>